<accession>P18675</accession>
<organism>
    <name type="scientific">Maclura pomifera</name>
    <name type="common">Osage orange</name>
    <name type="synonym">Ioxylon pomiferum</name>
    <dbReference type="NCBI Taxonomy" id="3496"/>
    <lineage>
        <taxon>Eukaryota</taxon>
        <taxon>Viridiplantae</taxon>
        <taxon>Streptophyta</taxon>
        <taxon>Embryophyta</taxon>
        <taxon>Tracheophyta</taxon>
        <taxon>Spermatophyta</taxon>
        <taxon>Magnoliopsida</taxon>
        <taxon>eudicotyledons</taxon>
        <taxon>Gunneridae</taxon>
        <taxon>Pentapetalae</taxon>
        <taxon>rosids</taxon>
        <taxon>fabids</taxon>
        <taxon>Rosales</taxon>
        <taxon>Moraceae</taxon>
        <taxon>Chlorophoreae</taxon>
        <taxon>Maclura</taxon>
    </lineage>
</organism>
<feature type="peptide" id="PRO_0000044035" description="Agglutinin beta-1 chain">
    <location>
        <begin position="1"/>
        <end position="21"/>
    </location>
</feature>
<feature type="region of interest" description="Disordered" evidence="1">
    <location>
        <begin position="1"/>
        <end position="21"/>
    </location>
</feature>
<feature type="compositionally biased region" description="Polar residues" evidence="1">
    <location>
        <begin position="1"/>
        <end position="10"/>
    </location>
</feature>
<keyword id="KW-0903">Direct protein sequencing</keyword>
<keyword id="KW-0430">Lectin</keyword>
<protein>
    <recommendedName>
        <fullName>Agglutinin beta-1 chain</fullName>
    </recommendedName>
    <alternativeName>
        <fullName>MPA</fullName>
    </alternativeName>
</protein>
<evidence type="ECO:0000256" key="1">
    <source>
        <dbReference type="SAM" id="MobiDB-lite"/>
    </source>
</evidence>
<evidence type="ECO:0000305" key="2"/>
<sequence length="21" mass="2196">NGPNGKSQSIIVGPWGDRVTN</sequence>
<reference key="1">
    <citation type="journal article" date="1989" name="Arch. Biochem. Biophys.">
        <title>Homology of the D-galactose-specific lectins from Artocarpus integrifolia and Maclura pomifera and the role of an unusual small polypeptide subunit.</title>
        <authorList>
            <person name="Young N.M."/>
            <person name="Johnston R.A.Z."/>
            <person name="Szabo A.G."/>
            <person name="Watson D.C."/>
        </authorList>
    </citation>
    <scope>PROTEIN SEQUENCE</scope>
    <source>
        <tissue>Seed</tissue>
    </source>
</reference>
<name>LECB1_MACPO</name>
<proteinExistence type="evidence at protein level"/>
<dbReference type="PIR" id="S03986">
    <property type="entry name" value="S03986"/>
</dbReference>
<dbReference type="GO" id="GO:0030246">
    <property type="term" value="F:carbohydrate binding"/>
    <property type="evidence" value="ECO:0007669"/>
    <property type="project" value="UniProtKB-KW"/>
</dbReference>
<comment type="function">
    <text>D-galactose-specific lectin, binds the T-antigen structure Gal-beta1,3-GalNAc.</text>
</comment>
<comment type="subunit">
    <text>Formed of four alpha chains and four beta chains.</text>
</comment>
<comment type="similarity">
    <text evidence="2">Belongs to the jacalin lectin family.</text>
</comment>